<dbReference type="EC" id="1.1.1.18" evidence="1"/>
<dbReference type="EMBL" id="AM889285">
    <property type="protein sequence ID" value="CAP54309.1"/>
    <property type="molecule type" value="Genomic_DNA"/>
</dbReference>
<dbReference type="EMBL" id="CP001189">
    <property type="protein sequence ID" value="ACI52167.1"/>
    <property type="molecule type" value="Genomic_DNA"/>
</dbReference>
<dbReference type="RefSeq" id="WP_012222667.1">
    <property type="nucleotide sequence ID" value="NC_010125.1"/>
</dbReference>
<dbReference type="RefSeq" id="WP_012554304.1">
    <property type="nucleotide sequence ID" value="NC_011365.1"/>
</dbReference>
<dbReference type="SMR" id="A9H5B7"/>
<dbReference type="STRING" id="272568.GDI0366"/>
<dbReference type="KEGG" id="gdi:GDI0366"/>
<dbReference type="KEGG" id="gdj:Gdia_2417"/>
<dbReference type="eggNOG" id="COG0673">
    <property type="taxonomic scope" value="Bacteria"/>
</dbReference>
<dbReference type="HOGENOM" id="CLU_023194_0_1_5"/>
<dbReference type="OrthoDB" id="9801953at2"/>
<dbReference type="Proteomes" id="UP000001176">
    <property type="component" value="Chromosome"/>
</dbReference>
<dbReference type="GO" id="GO:0050112">
    <property type="term" value="F:inositol 2-dehydrogenase (NAD+) activity"/>
    <property type="evidence" value="ECO:0007669"/>
    <property type="project" value="UniProtKB-UniRule"/>
</dbReference>
<dbReference type="GO" id="GO:0000166">
    <property type="term" value="F:nucleotide binding"/>
    <property type="evidence" value="ECO:0007669"/>
    <property type="project" value="InterPro"/>
</dbReference>
<dbReference type="GO" id="GO:0019310">
    <property type="term" value="P:inositol catabolic process"/>
    <property type="evidence" value="ECO:0007669"/>
    <property type="project" value="UniProtKB-UniRule"/>
</dbReference>
<dbReference type="Gene3D" id="3.30.360.10">
    <property type="entry name" value="Dihydrodipicolinate Reductase, domain 2"/>
    <property type="match status" value="1"/>
</dbReference>
<dbReference type="Gene3D" id="3.40.50.720">
    <property type="entry name" value="NAD(P)-binding Rossmann-like Domain"/>
    <property type="match status" value="1"/>
</dbReference>
<dbReference type="HAMAP" id="MF_01671">
    <property type="entry name" value="IolG"/>
    <property type="match status" value="1"/>
</dbReference>
<dbReference type="InterPro" id="IPR050424">
    <property type="entry name" value="Gfo-Idh-MocA_inositol_DH"/>
</dbReference>
<dbReference type="InterPro" id="IPR004104">
    <property type="entry name" value="Gfo/Idh/MocA-like_OxRdtase_C"/>
</dbReference>
<dbReference type="InterPro" id="IPR000683">
    <property type="entry name" value="Gfo/Idh/MocA-like_OxRdtase_N"/>
</dbReference>
<dbReference type="InterPro" id="IPR023794">
    <property type="entry name" value="MI/DCI_dehydrogenase"/>
</dbReference>
<dbReference type="InterPro" id="IPR036291">
    <property type="entry name" value="NAD(P)-bd_dom_sf"/>
</dbReference>
<dbReference type="PANTHER" id="PTHR43593">
    <property type="match status" value="1"/>
</dbReference>
<dbReference type="PANTHER" id="PTHR43593:SF1">
    <property type="entry name" value="INOSITOL 2-DEHYDROGENASE"/>
    <property type="match status" value="1"/>
</dbReference>
<dbReference type="Pfam" id="PF01408">
    <property type="entry name" value="GFO_IDH_MocA"/>
    <property type="match status" value="1"/>
</dbReference>
<dbReference type="Pfam" id="PF02894">
    <property type="entry name" value="GFO_IDH_MocA_C"/>
    <property type="match status" value="1"/>
</dbReference>
<dbReference type="SUPFAM" id="SSF55347">
    <property type="entry name" value="Glyceraldehyde-3-phosphate dehydrogenase-like, C-terminal domain"/>
    <property type="match status" value="1"/>
</dbReference>
<dbReference type="SUPFAM" id="SSF51735">
    <property type="entry name" value="NAD(P)-binding Rossmann-fold domains"/>
    <property type="match status" value="1"/>
</dbReference>
<protein>
    <recommendedName>
        <fullName evidence="1">Inositol 2-dehydrogenase</fullName>
        <ecNumber evidence="1">1.1.1.18</ecNumber>
    </recommendedName>
    <alternativeName>
        <fullName evidence="1">Myo-inositol 2-dehydrogenase</fullName>
        <shortName evidence="1">MI 2-dehydrogenase</shortName>
    </alternativeName>
</protein>
<accession>A9H5B7</accession>
<accession>B5ZFL5</accession>
<reference key="1">
    <citation type="journal article" date="2009" name="BMC Genomics">
        <title>Complete genome sequence of the sugarcane nitrogen-fixing endophyte Gluconacetobacter diazotrophicus Pal5.</title>
        <authorList>
            <person name="Bertalan M."/>
            <person name="Albano R."/>
            <person name="de Padua V."/>
            <person name="Rouws L."/>
            <person name="Rojas C."/>
            <person name="Hemerly A."/>
            <person name="Teixeira K."/>
            <person name="Schwab S."/>
            <person name="Araujo J."/>
            <person name="Oliveira A."/>
            <person name="Franca L."/>
            <person name="Magalhaes V."/>
            <person name="Alqueres S."/>
            <person name="Cardoso A."/>
            <person name="Almeida W."/>
            <person name="Loureiro M.M."/>
            <person name="Nogueira E."/>
            <person name="Cidade D."/>
            <person name="Oliveira D."/>
            <person name="Simao T."/>
            <person name="Macedo J."/>
            <person name="Valadao A."/>
            <person name="Dreschsel M."/>
            <person name="Freitas F."/>
            <person name="Vidal M."/>
            <person name="Guedes H."/>
            <person name="Rodrigues E."/>
            <person name="Meneses C."/>
            <person name="Brioso P."/>
            <person name="Pozzer L."/>
            <person name="Figueiredo D."/>
            <person name="Montano H."/>
            <person name="Junior J."/>
            <person name="de Souza Filho G."/>
            <person name="Martin Quintana Flores V."/>
            <person name="Ferreira B."/>
            <person name="Branco A."/>
            <person name="Gonzalez P."/>
            <person name="Guillobel H."/>
            <person name="Lemos M."/>
            <person name="Seibel L."/>
            <person name="Macedo J."/>
            <person name="Alves-Ferreira M."/>
            <person name="Sachetto-Martins G."/>
            <person name="Coelho A."/>
            <person name="Santos E."/>
            <person name="Amaral G."/>
            <person name="Neves A."/>
            <person name="Pacheco A.B."/>
            <person name="Carvalho D."/>
            <person name="Lery L."/>
            <person name="Bisch P."/>
            <person name="Rossle S.C."/>
            <person name="Urmenyi T."/>
            <person name="Rael Pereira A."/>
            <person name="Silva R."/>
            <person name="Rondinelli E."/>
            <person name="von Kruger W."/>
            <person name="Martins O."/>
            <person name="Baldani J.I."/>
            <person name="Ferreira P.C."/>
        </authorList>
    </citation>
    <scope>NUCLEOTIDE SEQUENCE [LARGE SCALE GENOMIC DNA]</scope>
    <source>
        <strain>ATCC 49037 / DSM 5601 / CCUG 37298 / CIP 103539 / LMG 7603 / PAl5</strain>
    </source>
</reference>
<reference key="2">
    <citation type="journal article" date="2010" name="Stand. Genomic Sci.">
        <title>Two genome sequences of the same bacterial strain, Gluconacetobacter diazotrophicus PAl 5, suggest a new standard in genome sequence submission.</title>
        <authorList>
            <person name="Giongo A."/>
            <person name="Tyler H.L."/>
            <person name="Zipperer U.N."/>
            <person name="Triplett E.W."/>
        </authorList>
    </citation>
    <scope>NUCLEOTIDE SEQUENCE [LARGE SCALE GENOMIC DNA]</scope>
    <source>
        <strain>ATCC 49037 / DSM 5601 / CCUG 37298 / CIP 103539 / LMG 7603 / PAl5</strain>
    </source>
</reference>
<organism>
    <name type="scientific">Gluconacetobacter diazotrophicus (strain ATCC 49037 / DSM 5601 / CCUG 37298 / CIP 103539 / LMG 7603 / PAl5)</name>
    <dbReference type="NCBI Taxonomy" id="272568"/>
    <lineage>
        <taxon>Bacteria</taxon>
        <taxon>Pseudomonadati</taxon>
        <taxon>Pseudomonadota</taxon>
        <taxon>Alphaproteobacteria</taxon>
        <taxon>Acetobacterales</taxon>
        <taxon>Acetobacteraceae</taxon>
        <taxon>Gluconacetobacter</taxon>
    </lineage>
</organism>
<comment type="function">
    <text evidence="1">Involved in the oxidation of myo-inositol (MI) to 2-keto-myo-inositol (2KMI or 2-inosose).</text>
</comment>
<comment type="catalytic activity">
    <reaction evidence="1">
        <text>myo-inositol + NAD(+) = scyllo-inosose + NADH + H(+)</text>
        <dbReference type="Rhea" id="RHEA:16949"/>
        <dbReference type="ChEBI" id="CHEBI:15378"/>
        <dbReference type="ChEBI" id="CHEBI:17268"/>
        <dbReference type="ChEBI" id="CHEBI:17811"/>
        <dbReference type="ChEBI" id="CHEBI:57540"/>
        <dbReference type="ChEBI" id="CHEBI:57945"/>
        <dbReference type="EC" id="1.1.1.18"/>
    </reaction>
</comment>
<comment type="subunit">
    <text evidence="1">Homotetramer.</text>
</comment>
<comment type="similarity">
    <text evidence="1">Belongs to the Gfo/Idh/MocA family.</text>
</comment>
<keyword id="KW-0520">NAD</keyword>
<keyword id="KW-0560">Oxidoreductase</keyword>
<keyword id="KW-1185">Reference proteome</keyword>
<gene>
    <name evidence="1" type="primary">iolG</name>
    <name type="ordered locus">GDI0366</name>
    <name type="ordered locus">Gdia_2417</name>
</gene>
<evidence type="ECO:0000255" key="1">
    <source>
        <dbReference type="HAMAP-Rule" id="MF_01671"/>
    </source>
</evidence>
<evidence type="ECO:0000305" key="2"/>
<feature type="chain" id="PRO_0000352569" description="Inositol 2-dehydrogenase">
    <location>
        <begin position="1"/>
        <end position="337"/>
    </location>
</feature>
<feature type="sequence conflict" description="In Ref. 2; ACI52167." evidence="2" ref="2">
    <original>N</original>
    <variation>K</variation>
    <location>
        <position position="270"/>
    </location>
</feature>
<sequence>MTLGIGVIGTGAIGQDHIRRVSRALSGGRIVALNDINADNARRAAQEWAPDAVICDTARDLVARPDVQAVMVTSWGGTHAEYVLDAIAAGKPVFCEKPLATNAADCLRIMEAEMARGRRLVQVGFNRRYDSGYLDLKAILDNGTIGDVLMVHAMHRNQRVGPNYKTEMAITDTLVHELDVHRWLLDGEYVSAQVIFPRRTSKALPHMRDPQIALLETKRGIRIDVEIFVNCQYGYDIQCAVVGELGQANLPDPPAVPVKTGETLSRHIMNDWKYRFIDAYDAEIQDFIDRASTGSPAGPDSWAGYAASVAADACVRAQESGRIEPIEMIAKPAFYSR</sequence>
<name>IOLG_GLUDA</name>
<proteinExistence type="inferred from homology"/>